<accession>Q6L5G1</accession>
<accession>B7EZ94</accession>
<proteinExistence type="evidence at transcript level"/>
<feature type="chain" id="PRO_0000346833" description="Zinc finger CCCH domain-containing protein 39">
    <location>
        <begin position="1"/>
        <end position="343"/>
    </location>
</feature>
<feature type="zinc finger region" description="C3H1-type 1" evidence="2">
    <location>
        <begin position="268"/>
        <end position="296"/>
    </location>
</feature>
<feature type="zinc finger region" description="C3H1-type 2" evidence="2">
    <location>
        <begin position="306"/>
        <end position="334"/>
    </location>
</feature>
<feature type="coiled-coil region" evidence="1">
    <location>
        <begin position="114"/>
        <end position="147"/>
    </location>
</feature>
<protein>
    <recommendedName>
        <fullName>Zinc finger CCCH domain-containing protein 39</fullName>
        <shortName>OsC3H39</shortName>
    </recommendedName>
</protein>
<dbReference type="EMBL" id="AC098571">
    <property type="protein sequence ID" value="AAT39144.1"/>
    <property type="molecule type" value="Genomic_DNA"/>
</dbReference>
<dbReference type="EMBL" id="AC098832">
    <property type="protein sequence ID" value="AAT69599.1"/>
    <property type="molecule type" value="Genomic_DNA"/>
</dbReference>
<dbReference type="EMBL" id="AP008211">
    <property type="protein sequence ID" value="BAF18314.1"/>
    <property type="molecule type" value="Genomic_DNA"/>
</dbReference>
<dbReference type="EMBL" id="AP014961">
    <property type="protein sequence ID" value="BAS95478.1"/>
    <property type="molecule type" value="Genomic_DNA"/>
</dbReference>
<dbReference type="EMBL" id="CM000142">
    <property type="protein sequence ID" value="EEE64791.1"/>
    <property type="molecule type" value="Genomic_DNA"/>
</dbReference>
<dbReference type="EMBL" id="AK106354">
    <property type="protein sequence ID" value="BAG97691.1"/>
    <property type="molecule type" value="mRNA"/>
</dbReference>
<dbReference type="RefSeq" id="XP_015640820.1">
    <property type="nucleotide sequence ID" value="XM_015785334.1"/>
</dbReference>
<dbReference type="FunCoup" id="Q6L5G1">
    <property type="interactions" value="665"/>
</dbReference>
<dbReference type="STRING" id="39947.Q6L5G1"/>
<dbReference type="PaxDb" id="39947-Q6L5G1"/>
<dbReference type="EnsemblPlants" id="Os05t0576300-01">
    <property type="protein sequence ID" value="Os05t0576300-01"/>
    <property type="gene ID" value="Os05g0576300"/>
</dbReference>
<dbReference type="Gramene" id="Os05t0576300-01">
    <property type="protein sequence ID" value="Os05t0576300-01"/>
    <property type="gene ID" value="Os05g0576300"/>
</dbReference>
<dbReference type="KEGG" id="dosa:Os05g0576300"/>
<dbReference type="eggNOG" id="KOG1677">
    <property type="taxonomic scope" value="Eukaryota"/>
</dbReference>
<dbReference type="HOGENOM" id="CLU_050602_1_0_1"/>
<dbReference type="InParanoid" id="Q6L5G1"/>
<dbReference type="OMA" id="SPRAHPC"/>
<dbReference type="OrthoDB" id="410307at2759"/>
<dbReference type="Proteomes" id="UP000000763">
    <property type="component" value="Chromosome 5"/>
</dbReference>
<dbReference type="Proteomes" id="UP000007752">
    <property type="component" value="Chromosome 5"/>
</dbReference>
<dbReference type="Proteomes" id="UP000059680">
    <property type="component" value="Chromosome 5"/>
</dbReference>
<dbReference type="GO" id="GO:0003677">
    <property type="term" value="F:DNA binding"/>
    <property type="evidence" value="ECO:0007669"/>
    <property type="project" value="UniProtKB-KW"/>
</dbReference>
<dbReference type="GO" id="GO:0003729">
    <property type="term" value="F:mRNA binding"/>
    <property type="evidence" value="ECO:0007669"/>
    <property type="project" value="InterPro"/>
</dbReference>
<dbReference type="GO" id="GO:0008270">
    <property type="term" value="F:zinc ion binding"/>
    <property type="evidence" value="ECO:0007669"/>
    <property type="project" value="UniProtKB-KW"/>
</dbReference>
<dbReference type="FunFam" id="4.10.1000.10:FF:000001">
    <property type="entry name" value="zinc finger CCCH domain-containing protein 15-like"/>
    <property type="match status" value="1"/>
</dbReference>
<dbReference type="FunFam" id="4.10.1000.10:FF:000002">
    <property type="entry name" value="Zinc finger protein 36, C3H1 type-like 1"/>
    <property type="match status" value="1"/>
</dbReference>
<dbReference type="Gene3D" id="4.10.1000.10">
    <property type="entry name" value="Zinc finger, CCCH-type"/>
    <property type="match status" value="2"/>
</dbReference>
<dbReference type="InterPro" id="IPR045877">
    <property type="entry name" value="ZFP36-like"/>
</dbReference>
<dbReference type="InterPro" id="IPR000571">
    <property type="entry name" value="Znf_CCCH"/>
</dbReference>
<dbReference type="InterPro" id="IPR036855">
    <property type="entry name" value="Znf_CCCH_sf"/>
</dbReference>
<dbReference type="PANTHER" id="PTHR12547">
    <property type="entry name" value="CCCH ZINC FINGER/TIS11-RELATED"/>
    <property type="match status" value="1"/>
</dbReference>
<dbReference type="PANTHER" id="PTHR12547:SF162">
    <property type="entry name" value="ZINC FINGER CCCH DOMAIN-CONTAINING PROTEIN 15"/>
    <property type="match status" value="1"/>
</dbReference>
<dbReference type="Pfam" id="PF00642">
    <property type="entry name" value="zf-CCCH"/>
    <property type="match status" value="2"/>
</dbReference>
<dbReference type="SMART" id="SM00356">
    <property type="entry name" value="ZnF_C3H1"/>
    <property type="match status" value="2"/>
</dbReference>
<dbReference type="SUPFAM" id="SSF90229">
    <property type="entry name" value="CCCH zinc finger"/>
    <property type="match status" value="2"/>
</dbReference>
<dbReference type="PROSITE" id="PS50103">
    <property type="entry name" value="ZF_C3H1"/>
    <property type="match status" value="2"/>
</dbReference>
<keyword id="KW-0175">Coiled coil</keyword>
<keyword id="KW-0238">DNA-binding</keyword>
<keyword id="KW-0479">Metal-binding</keyword>
<keyword id="KW-1185">Reference proteome</keyword>
<keyword id="KW-0677">Repeat</keyword>
<keyword id="KW-0862">Zinc</keyword>
<keyword id="KW-0863">Zinc-finger</keyword>
<organism>
    <name type="scientific">Oryza sativa subsp. japonica</name>
    <name type="common">Rice</name>
    <dbReference type="NCBI Taxonomy" id="39947"/>
    <lineage>
        <taxon>Eukaryota</taxon>
        <taxon>Viridiplantae</taxon>
        <taxon>Streptophyta</taxon>
        <taxon>Embryophyta</taxon>
        <taxon>Tracheophyta</taxon>
        <taxon>Spermatophyta</taxon>
        <taxon>Magnoliopsida</taxon>
        <taxon>Liliopsida</taxon>
        <taxon>Poales</taxon>
        <taxon>Poaceae</taxon>
        <taxon>BOP clade</taxon>
        <taxon>Oryzoideae</taxon>
        <taxon>Oryzeae</taxon>
        <taxon>Oryzinae</taxon>
        <taxon>Oryza</taxon>
        <taxon>Oryza sativa</taxon>
    </lineage>
</organism>
<sequence length="343" mass="37169">MQEALLPPAHPGRFYSDFGPKPFGSGDQRLSSPNLLTNGGDLFYGCYSPFSPTRVLSPPPPRRAASFSHCSSSSDSVVDDGDGAGAAAATEHRLHLAHLALQYQEMANRFELCLSHLADAADEAAALRQENAELRVANNDLACRIAKFGGRQSSAIALAGDLRRLRLPKEQTVPALPPPPQSPPAALMNPVAVPEKQAVLPKSISIRSTGYQKLNQGGKHRVSKPVNVGSQRVFVGIDGAEGGEHKVGVKKEEPPMGGLEFEVYNQGMFKTELCNKWEETGACPYGDQCQFAHGVAELRPVIRHPRYKTQVCRMVLAGGVCPYGHRCHFRHSITPADRFSFGH</sequence>
<evidence type="ECO:0000255" key="1"/>
<evidence type="ECO:0000255" key="2">
    <source>
        <dbReference type="PROSITE-ProRule" id="PRU00723"/>
    </source>
</evidence>
<evidence type="ECO:0000312" key="3">
    <source>
        <dbReference type="EMBL" id="EEE64791.1"/>
    </source>
</evidence>
<reference key="1">
    <citation type="journal article" date="2005" name="Mol. Genet. Genomics">
        <title>A fine physical map of the rice chromosome 5.</title>
        <authorList>
            <person name="Cheng C.-H."/>
            <person name="Chung M.C."/>
            <person name="Liu S.-M."/>
            <person name="Chen S.-K."/>
            <person name="Kao F.Y."/>
            <person name="Lin S.-J."/>
            <person name="Hsiao S.-H."/>
            <person name="Tseng I.C."/>
            <person name="Hsing Y.-I.C."/>
            <person name="Wu H.-P."/>
            <person name="Chen C.-S."/>
            <person name="Shaw J.-F."/>
            <person name="Wu J."/>
            <person name="Matsumoto T."/>
            <person name="Sasaki T."/>
            <person name="Chen H.-C."/>
            <person name="Chow T.-Y."/>
        </authorList>
    </citation>
    <scope>NUCLEOTIDE SEQUENCE [LARGE SCALE GENOMIC DNA]</scope>
    <source>
        <strain>cv. Nipponbare</strain>
    </source>
</reference>
<reference key="2">
    <citation type="journal article" date="2005" name="Nature">
        <title>The map-based sequence of the rice genome.</title>
        <authorList>
            <consortium name="International rice genome sequencing project (IRGSP)"/>
        </authorList>
    </citation>
    <scope>NUCLEOTIDE SEQUENCE [LARGE SCALE GENOMIC DNA]</scope>
    <source>
        <strain>cv. Nipponbare</strain>
    </source>
</reference>
<reference key="3">
    <citation type="journal article" date="2008" name="Nucleic Acids Res.">
        <title>The rice annotation project database (RAP-DB): 2008 update.</title>
        <authorList>
            <consortium name="The rice annotation project (RAP)"/>
        </authorList>
    </citation>
    <scope>GENOME REANNOTATION</scope>
    <source>
        <strain>cv. Nipponbare</strain>
    </source>
</reference>
<reference key="4">
    <citation type="journal article" date="2013" name="Rice">
        <title>Improvement of the Oryza sativa Nipponbare reference genome using next generation sequence and optical map data.</title>
        <authorList>
            <person name="Kawahara Y."/>
            <person name="de la Bastide M."/>
            <person name="Hamilton J.P."/>
            <person name="Kanamori H."/>
            <person name="McCombie W.R."/>
            <person name="Ouyang S."/>
            <person name="Schwartz D.C."/>
            <person name="Tanaka T."/>
            <person name="Wu J."/>
            <person name="Zhou S."/>
            <person name="Childs K.L."/>
            <person name="Davidson R.M."/>
            <person name="Lin H."/>
            <person name="Quesada-Ocampo L."/>
            <person name="Vaillancourt B."/>
            <person name="Sakai H."/>
            <person name="Lee S.S."/>
            <person name="Kim J."/>
            <person name="Numa H."/>
            <person name="Itoh T."/>
            <person name="Buell C.R."/>
            <person name="Matsumoto T."/>
        </authorList>
    </citation>
    <scope>GENOME REANNOTATION</scope>
    <source>
        <strain>cv. Nipponbare</strain>
    </source>
</reference>
<reference key="5">
    <citation type="journal article" date="2005" name="PLoS Biol.">
        <title>The genomes of Oryza sativa: a history of duplications.</title>
        <authorList>
            <person name="Yu J."/>
            <person name="Wang J."/>
            <person name="Lin W."/>
            <person name="Li S."/>
            <person name="Li H."/>
            <person name="Zhou J."/>
            <person name="Ni P."/>
            <person name="Dong W."/>
            <person name="Hu S."/>
            <person name="Zeng C."/>
            <person name="Zhang J."/>
            <person name="Zhang Y."/>
            <person name="Li R."/>
            <person name="Xu Z."/>
            <person name="Li S."/>
            <person name="Li X."/>
            <person name="Zheng H."/>
            <person name="Cong L."/>
            <person name="Lin L."/>
            <person name="Yin J."/>
            <person name="Geng J."/>
            <person name="Li G."/>
            <person name="Shi J."/>
            <person name="Liu J."/>
            <person name="Lv H."/>
            <person name="Li J."/>
            <person name="Wang J."/>
            <person name="Deng Y."/>
            <person name="Ran L."/>
            <person name="Shi X."/>
            <person name="Wang X."/>
            <person name="Wu Q."/>
            <person name="Li C."/>
            <person name="Ren X."/>
            <person name="Wang J."/>
            <person name="Wang X."/>
            <person name="Li D."/>
            <person name="Liu D."/>
            <person name="Zhang X."/>
            <person name="Ji Z."/>
            <person name="Zhao W."/>
            <person name="Sun Y."/>
            <person name="Zhang Z."/>
            <person name="Bao J."/>
            <person name="Han Y."/>
            <person name="Dong L."/>
            <person name="Ji J."/>
            <person name="Chen P."/>
            <person name="Wu S."/>
            <person name="Liu J."/>
            <person name="Xiao Y."/>
            <person name="Bu D."/>
            <person name="Tan J."/>
            <person name="Yang L."/>
            <person name="Ye C."/>
            <person name="Zhang J."/>
            <person name="Xu J."/>
            <person name="Zhou Y."/>
            <person name="Yu Y."/>
            <person name="Zhang B."/>
            <person name="Zhuang S."/>
            <person name="Wei H."/>
            <person name="Liu B."/>
            <person name="Lei M."/>
            <person name="Yu H."/>
            <person name="Li Y."/>
            <person name="Xu H."/>
            <person name="Wei S."/>
            <person name="He X."/>
            <person name="Fang L."/>
            <person name="Zhang Z."/>
            <person name="Zhang Y."/>
            <person name="Huang X."/>
            <person name="Su Z."/>
            <person name="Tong W."/>
            <person name="Li J."/>
            <person name="Tong Z."/>
            <person name="Li S."/>
            <person name="Ye J."/>
            <person name="Wang L."/>
            <person name="Fang L."/>
            <person name="Lei T."/>
            <person name="Chen C.-S."/>
            <person name="Chen H.-C."/>
            <person name="Xu Z."/>
            <person name="Li H."/>
            <person name="Huang H."/>
            <person name="Zhang F."/>
            <person name="Xu H."/>
            <person name="Li N."/>
            <person name="Zhao C."/>
            <person name="Li S."/>
            <person name="Dong L."/>
            <person name="Huang Y."/>
            <person name="Li L."/>
            <person name="Xi Y."/>
            <person name="Qi Q."/>
            <person name="Li W."/>
            <person name="Zhang B."/>
            <person name="Hu W."/>
            <person name="Zhang Y."/>
            <person name="Tian X."/>
            <person name="Jiao Y."/>
            <person name="Liang X."/>
            <person name="Jin J."/>
            <person name="Gao L."/>
            <person name="Zheng W."/>
            <person name="Hao B."/>
            <person name="Liu S.-M."/>
            <person name="Wang W."/>
            <person name="Yuan L."/>
            <person name="Cao M."/>
            <person name="McDermott J."/>
            <person name="Samudrala R."/>
            <person name="Wang J."/>
            <person name="Wong G.K.-S."/>
            <person name="Yang H."/>
        </authorList>
    </citation>
    <scope>NUCLEOTIDE SEQUENCE [LARGE SCALE GENOMIC DNA]</scope>
    <source>
        <strain>cv. Nipponbare</strain>
    </source>
</reference>
<reference key="6">
    <citation type="journal article" date="2003" name="Science">
        <title>Collection, mapping, and annotation of over 28,000 cDNA clones from japonica rice.</title>
        <authorList>
            <consortium name="The rice full-length cDNA consortium"/>
        </authorList>
    </citation>
    <scope>NUCLEOTIDE SEQUENCE [LARGE SCALE MRNA]</scope>
    <source>
        <strain>cv. Nipponbare</strain>
    </source>
</reference>
<reference key="7">
    <citation type="journal article" date="2008" name="BMC Genomics">
        <title>Genome-wide analysis of CCCH zinc finger family in Arabidopsis and rice.</title>
        <authorList>
            <person name="Wang D."/>
            <person name="Guo Y."/>
            <person name="Wu C."/>
            <person name="Yang G."/>
            <person name="Li Y."/>
            <person name="Zheng C."/>
        </authorList>
    </citation>
    <scope>NOMENCLATURE</scope>
</reference>
<gene>
    <name type="ordered locus">Os05g0576300</name>
    <name type="ordered locus">LOC_Os05g50080</name>
    <name type="ORF">OJ1126_B10.1</name>
    <name type="ORF">OJ1268_B08.22</name>
    <name evidence="3" type="ORF">OsJ_19647</name>
</gene>
<name>C3H39_ORYSJ</name>